<comment type="similarity">
    <text evidence="1">Belongs to the UPF0270 family.</text>
</comment>
<sequence>MIIPWQGLAPDTLDNLIESFVLREGTDYGEHERSLEQKVADVKRQLQSGEAVLVWSELHETVNIMPKKQFRE</sequence>
<accession>P0A2P5</accession>
<accession>Q8Z1Z0</accession>
<accession>Q8ZLL0</accession>
<gene>
    <name evidence="1" type="primary">yheU</name>
    <name type="ordered locus">STY4334</name>
    <name type="ordered locus">t4042</name>
</gene>
<organism>
    <name type="scientific">Salmonella typhi</name>
    <dbReference type="NCBI Taxonomy" id="90370"/>
    <lineage>
        <taxon>Bacteria</taxon>
        <taxon>Pseudomonadati</taxon>
        <taxon>Pseudomonadota</taxon>
        <taxon>Gammaproteobacteria</taxon>
        <taxon>Enterobacterales</taxon>
        <taxon>Enterobacteriaceae</taxon>
        <taxon>Salmonella</taxon>
    </lineage>
</organism>
<reference key="1">
    <citation type="journal article" date="2001" name="Nature">
        <title>Complete genome sequence of a multiple drug resistant Salmonella enterica serovar Typhi CT18.</title>
        <authorList>
            <person name="Parkhill J."/>
            <person name="Dougan G."/>
            <person name="James K.D."/>
            <person name="Thomson N.R."/>
            <person name="Pickard D."/>
            <person name="Wain J."/>
            <person name="Churcher C.M."/>
            <person name="Mungall K.L."/>
            <person name="Bentley S.D."/>
            <person name="Holden M.T.G."/>
            <person name="Sebaihia M."/>
            <person name="Baker S."/>
            <person name="Basham D."/>
            <person name="Brooks K."/>
            <person name="Chillingworth T."/>
            <person name="Connerton P."/>
            <person name="Cronin A."/>
            <person name="Davis P."/>
            <person name="Davies R.M."/>
            <person name="Dowd L."/>
            <person name="White N."/>
            <person name="Farrar J."/>
            <person name="Feltwell T."/>
            <person name="Hamlin N."/>
            <person name="Haque A."/>
            <person name="Hien T.T."/>
            <person name="Holroyd S."/>
            <person name="Jagels K."/>
            <person name="Krogh A."/>
            <person name="Larsen T.S."/>
            <person name="Leather S."/>
            <person name="Moule S."/>
            <person name="O'Gaora P."/>
            <person name="Parry C."/>
            <person name="Quail M.A."/>
            <person name="Rutherford K.M."/>
            <person name="Simmonds M."/>
            <person name="Skelton J."/>
            <person name="Stevens K."/>
            <person name="Whitehead S."/>
            <person name="Barrell B.G."/>
        </authorList>
    </citation>
    <scope>NUCLEOTIDE SEQUENCE [LARGE SCALE GENOMIC DNA]</scope>
    <source>
        <strain>CT18</strain>
    </source>
</reference>
<reference key="2">
    <citation type="journal article" date="2003" name="J. Bacteriol.">
        <title>Comparative genomics of Salmonella enterica serovar Typhi strains Ty2 and CT18.</title>
        <authorList>
            <person name="Deng W."/>
            <person name="Liou S.-R."/>
            <person name="Plunkett G. III"/>
            <person name="Mayhew G.F."/>
            <person name="Rose D.J."/>
            <person name="Burland V."/>
            <person name="Kodoyianni V."/>
            <person name="Schwartz D.C."/>
            <person name="Blattner F.R."/>
        </authorList>
    </citation>
    <scope>NUCLEOTIDE SEQUENCE [LARGE SCALE GENOMIC DNA]</scope>
    <source>
        <strain>ATCC 700931 / Ty2</strain>
    </source>
</reference>
<dbReference type="EMBL" id="AL513382">
    <property type="protein sequence ID" value="CAD08150.1"/>
    <property type="molecule type" value="Genomic_DNA"/>
</dbReference>
<dbReference type="EMBL" id="AE014613">
    <property type="protein sequence ID" value="AAO71510.1"/>
    <property type="molecule type" value="Genomic_DNA"/>
</dbReference>
<dbReference type="RefSeq" id="NP_458438.1">
    <property type="nucleotide sequence ID" value="NC_003198.1"/>
</dbReference>
<dbReference type="RefSeq" id="WP_000586568.1">
    <property type="nucleotide sequence ID" value="NZ_WSUR01000001.1"/>
</dbReference>
<dbReference type="SMR" id="P0A2P5"/>
<dbReference type="STRING" id="220341.gene:17588163"/>
<dbReference type="KEGG" id="stt:t4042"/>
<dbReference type="KEGG" id="sty:STY4334"/>
<dbReference type="PATRIC" id="fig|220341.7.peg.4429"/>
<dbReference type="eggNOG" id="COG3089">
    <property type="taxonomic scope" value="Bacteria"/>
</dbReference>
<dbReference type="HOGENOM" id="CLU_186759_1_0_6"/>
<dbReference type="OMA" id="MIIPWKE"/>
<dbReference type="OrthoDB" id="6120729at2"/>
<dbReference type="Proteomes" id="UP000000541">
    <property type="component" value="Chromosome"/>
</dbReference>
<dbReference type="Proteomes" id="UP000002670">
    <property type="component" value="Chromosome"/>
</dbReference>
<dbReference type="Gene3D" id="1.10.10.610">
    <property type="entry name" value="YehU-like"/>
    <property type="match status" value="1"/>
</dbReference>
<dbReference type="HAMAP" id="MF_00690">
    <property type="entry name" value="UPF0270"/>
    <property type="match status" value="1"/>
</dbReference>
<dbReference type="InterPro" id="IPR010648">
    <property type="entry name" value="UPF0270"/>
</dbReference>
<dbReference type="InterPro" id="IPR036685">
    <property type="entry name" value="YehU-like_sf"/>
</dbReference>
<dbReference type="NCBIfam" id="NF003438">
    <property type="entry name" value="PRK04966.1"/>
    <property type="match status" value="1"/>
</dbReference>
<dbReference type="Pfam" id="PF06794">
    <property type="entry name" value="UPF0270"/>
    <property type="match status" value="1"/>
</dbReference>
<dbReference type="PIRSF" id="PIRSF006169">
    <property type="entry name" value="UCP006169"/>
    <property type="match status" value="1"/>
</dbReference>
<dbReference type="SUPFAM" id="SSF118001">
    <property type="entry name" value="YehU-like"/>
    <property type="match status" value="1"/>
</dbReference>
<proteinExistence type="inferred from homology"/>
<protein>
    <recommendedName>
        <fullName evidence="1">UPF0270 protein YheU</fullName>
    </recommendedName>
</protein>
<name>YHEU_SALTI</name>
<evidence type="ECO:0000255" key="1">
    <source>
        <dbReference type="HAMAP-Rule" id="MF_00690"/>
    </source>
</evidence>
<feature type="chain" id="PRO_0000214857" description="UPF0270 protein YheU">
    <location>
        <begin position="1"/>
        <end position="72"/>
    </location>
</feature>